<keyword id="KW-0007">Acetylation</keyword>
<keyword id="KW-0106">Calcium</keyword>
<keyword id="KW-0903">Direct protein sequencing</keyword>
<keyword id="KW-0378">Hydrolase</keyword>
<keyword id="KW-0443">Lipid metabolism</keyword>
<keyword id="KW-0460">Magnesium</keyword>
<keyword id="KW-0479">Metal-binding</keyword>
<keyword id="KW-0585">Phenylalanine catabolism</keyword>
<keyword id="KW-0597">Phosphoprotein</keyword>
<keyword id="KW-1185">Reference proteome</keyword>
<keyword id="KW-0828">Tyrosine catabolism</keyword>
<sequence>MSFIPVAEDSDFPIQNLPYGVFSTQSNPKPRIGVAIGDQILDLSVIKHLFTGPVLSKHQHVFDETTLNSFMGLGQAAWKEARASLQNLLSASQAQLRDDKELRQRAFTSQASATMHLPATIGDYTDFYSSLQHATNVGIMFRGKENALLPNWLHLPVGYHGRASSVVVSGTPIRRPMGQMRPDNSKPPVYGASKRLDMELEMAFFVGPGNRFGEPIPISKAQEHIFGMVLMNDWSARDIQQWEYVPLGPFLGKSFGTTISPWVVPMDALMPFVVPNPKQDPKPLPYLCHSQPYTFDINLSVALKGEGMSQAATICRSNFKHMYWTILQQLTHHSVNGCNLRPGDLLASGTISGSDPESFGSMLELSWKGTKAIDVGQGQTRTFLLDGDEVIITGHCQGDGYRVGFGQCAGKVLPALSPA</sequence>
<comment type="catalytic activity">
    <reaction evidence="2">
        <text>4-fumarylacetoacetate + H2O = acetoacetate + fumarate + H(+)</text>
        <dbReference type="Rhea" id="RHEA:10244"/>
        <dbReference type="ChEBI" id="CHEBI:13705"/>
        <dbReference type="ChEBI" id="CHEBI:15377"/>
        <dbReference type="ChEBI" id="CHEBI:15378"/>
        <dbReference type="ChEBI" id="CHEBI:18034"/>
        <dbReference type="ChEBI" id="CHEBI:29806"/>
        <dbReference type="EC" id="3.7.1.2"/>
    </reaction>
</comment>
<comment type="cofactor">
    <cofactor evidence="2">
        <name>Ca(2+)</name>
        <dbReference type="ChEBI" id="CHEBI:29108"/>
    </cofactor>
</comment>
<comment type="cofactor">
    <cofactor evidence="2">
        <name>Mg(2+)</name>
        <dbReference type="ChEBI" id="CHEBI:18420"/>
    </cofactor>
</comment>
<comment type="pathway">
    <text>Amino-acid degradation; L-phenylalanine degradation; acetoacetate and fumarate from L-phenylalanine: step 6/6.</text>
</comment>
<comment type="subunit">
    <text evidence="2">Homodimer.</text>
</comment>
<comment type="tissue specificity">
    <text evidence="3">Mainly in liver and kidney.</text>
</comment>
<comment type="similarity">
    <text evidence="4">Belongs to the FAH family.</text>
</comment>
<feature type="initiator methionine" description="Removed" evidence="1">
    <location>
        <position position="1"/>
    </location>
</feature>
<feature type="chain" id="PRO_0000156827" description="Fumarylacetoacetase">
    <location>
        <begin position="2"/>
        <end position="419"/>
    </location>
</feature>
<feature type="active site" description="Proton acceptor" evidence="4">
    <location>
        <position position="133"/>
    </location>
</feature>
<feature type="binding site" evidence="2">
    <location>
        <position position="126"/>
    </location>
    <ligand>
        <name>Ca(2+)</name>
        <dbReference type="ChEBI" id="CHEBI:29108"/>
    </ligand>
</feature>
<feature type="binding site" evidence="2">
    <location>
        <position position="128"/>
    </location>
    <ligand>
        <name>substrate</name>
    </ligand>
</feature>
<feature type="binding site" evidence="2">
    <location>
        <position position="142"/>
    </location>
    <ligand>
        <name>substrate</name>
    </ligand>
</feature>
<feature type="binding site" evidence="2">
    <location>
        <position position="199"/>
    </location>
    <ligand>
        <name>Ca(2+)</name>
        <dbReference type="ChEBI" id="CHEBI:29108"/>
    </ligand>
</feature>
<feature type="binding site" evidence="2">
    <location>
        <position position="201"/>
    </location>
    <ligand>
        <name>Ca(2+)</name>
        <dbReference type="ChEBI" id="CHEBI:29108"/>
    </ligand>
</feature>
<feature type="binding site" evidence="2">
    <location>
        <position position="233"/>
    </location>
    <ligand>
        <name>Ca(2+)</name>
        <dbReference type="ChEBI" id="CHEBI:29108"/>
    </ligand>
</feature>
<feature type="binding site" evidence="2">
    <location>
        <position position="233"/>
    </location>
    <ligand>
        <name>Mg(2+)</name>
        <dbReference type="ChEBI" id="CHEBI:18420"/>
    </ligand>
</feature>
<feature type="binding site" evidence="2">
    <location>
        <position position="240"/>
    </location>
    <ligand>
        <name>substrate</name>
    </ligand>
</feature>
<feature type="binding site" evidence="2">
    <location>
        <position position="244"/>
    </location>
    <ligand>
        <name>substrate</name>
    </ligand>
</feature>
<feature type="binding site" evidence="2">
    <location>
        <position position="253"/>
    </location>
    <ligand>
        <name>Mg(2+)</name>
        <dbReference type="ChEBI" id="CHEBI:18420"/>
    </ligand>
</feature>
<feature type="binding site" evidence="2">
    <location>
        <position position="257"/>
    </location>
    <ligand>
        <name>Mg(2+)</name>
        <dbReference type="ChEBI" id="CHEBI:18420"/>
    </ligand>
</feature>
<feature type="binding site" evidence="2">
    <location>
        <position position="350"/>
    </location>
    <ligand>
        <name>substrate</name>
    </ligand>
</feature>
<feature type="modified residue" description="N-acetylserine" evidence="1">
    <location>
        <position position="2"/>
    </location>
</feature>
<feature type="modified residue" description="Phosphoserine" evidence="5">
    <location>
        <position position="84"/>
    </location>
</feature>
<feature type="modified residue" description="Phosphoserine" evidence="5">
    <location>
        <position position="92"/>
    </location>
</feature>
<feature type="modified residue" description="Phosphoserine" evidence="1">
    <location>
        <position position="309"/>
    </location>
</feature>
<feature type="modified residue" description="Phosphoserine" evidence="5">
    <location>
        <position position="417"/>
    </location>
</feature>
<organism>
    <name type="scientific">Rattus norvegicus</name>
    <name type="common">Rat</name>
    <dbReference type="NCBI Taxonomy" id="10116"/>
    <lineage>
        <taxon>Eukaryota</taxon>
        <taxon>Metazoa</taxon>
        <taxon>Chordata</taxon>
        <taxon>Craniata</taxon>
        <taxon>Vertebrata</taxon>
        <taxon>Euteleostomi</taxon>
        <taxon>Mammalia</taxon>
        <taxon>Eutheria</taxon>
        <taxon>Euarchontoglires</taxon>
        <taxon>Glires</taxon>
        <taxon>Rodentia</taxon>
        <taxon>Myomorpha</taxon>
        <taxon>Muroidea</taxon>
        <taxon>Muridae</taxon>
        <taxon>Murinae</taxon>
        <taxon>Rattus</taxon>
    </lineage>
</organism>
<name>FAAA_RAT</name>
<proteinExistence type="evidence at protein level"/>
<evidence type="ECO:0000250" key="1">
    <source>
        <dbReference type="UniProtKB" id="P16930"/>
    </source>
</evidence>
<evidence type="ECO:0000250" key="2">
    <source>
        <dbReference type="UniProtKB" id="P35505"/>
    </source>
</evidence>
<evidence type="ECO:0000269" key="3">
    <source>
    </source>
</evidence>
<evidence type="ECO:0000305" key="4"/>
<evidence type="ECO:0007744" key="5">
    <source>
    </source>
</evidence>
<gene>
    <name type="primary">Fah</name>
</gene>
<dbReference type="EC" id="3.7.1.2" evidence="2"/>
<dbReference type="EMBL" id="M77694">
    <property type="protein sequence ID" value="AAA41142.1"/>
    <property type="molecule type" value="mRNA"/>
</dbReference>
<dbReference type="EMBL" id="BC076381">
    <property type="protein sequence ID" value="AAH76381.1"/>
    <property type="molecule type" value="mRNA"/>
</dbReference>
<dbReference type="PIR" id="JH0467">
    <property type="entry name" value="JH0467"/>
</dbReference>
<dbReference type="RefSeq" id="NP_058877.1">
    <property type="nucleotide sequence ID" value="NM_017181.2"/>
</dbReference>
<dbReference type="SMR" id="P25093"/>
<dbReference type="FunCoup" id="P25093">
    <property type="interactions" value="1097"/>
</dbReference>
<dbReference type="STRING" id="10116.ENSRNOP00000061132"/>
<dbReference type="iPTMnet" id="P25093"/>
<dbReference type="PhosphoSitePlus" id="P25093"/>
<dbReference type="PaxDb" id="10116-ENSRNOP00000061132"/>
<dbReference type="Ensembl" id="ENSRNOT00000068167.4">
    <property type="protein sequence ID" value="ENSRNOP00000061132.4"/>
    <property type="gene ID" value="ENSRNOG00000013223.7"/>
</dbReference>
<dbReference type="GeneID" id="29383"/>
<dbReference type="KEGG" id="rno:29383"/>
<dbReference type="UCSC" id="RGD:61932">
    <property type="organism name" value="rat"/>
</dbReference>
<dbReference type="AGR" id="RGD:61932"/>
<dbReference type="CTD" id="2184"/>
<dbReference type="RGD" id="61932">
    <property type="gene designation" value="Fah"/>
</dbReference>
<dbReference type="eggNOG" id="KOG2843">
    <property type="taxonomic scope" value="Eukaryota"/>
</dbReference>
<dbReference type="GeneTree" id="ENSGT00390000008646"/>
<dbReference type="InParanoid" id="P25093"/>
<dbReference type="OMA" id="YWTAAQQ"/>
<dbReference type="OrthoDB" id="9971669at2759"/>
<dbReference type="PhylomeDB" id="P25093"/>
<dbReference type="Reactome" id="R-RNO-8963684">
    <property type="pathway name" value="Tyrosine catabolism"/>
</dbReference>
<dbReference type="UniPathway" id="UPA00139">
    <property type="reaction ID" value="UER00341"/>
</dbReference>
<dbReference type="PRO" id="PR:P25093"/>
<dbReference type="Proteomes" id="UP000002494">
    <property type="component" value="Chromosome 1"/>
</dbReference>
<dbReference type="GO" id="GO:0004334">
    <property type="term" value="F:fumarylacetoacetase activity"/>
    <property type="evidence" value="ECO:0000266"/>
    <property type="project" value="RGD"/>
</dbReference>
<dbReference type="GO" id="GO:0046872">
    <property type="term" value="F:metal ion binding"/>
    <property type="evidence" value="ECO:0007669"/>
    <property type="project" value="UniProtKB-KW"/>
</dbReference>
<dbReference type="GO" id="GO:0006527">
    <property type="term" value="P:arginine catabolic process"/>
    <property type="evidence" value="ECO:0000266"/>
    <property type="project" value="RGD"/>
</dbReference>
<dbReference type="GO" id="GO:1902000">
    <property type="term" value="P:homogentisate catabolic process"/>
    <property type="evidence" value="ECO:0000318"/>
    <property type="project" value="GO_Central"/>
</dbReference>
<dbReference type="GO" id="GO:0006559">
    <property type="term" value="P:L-phenylalanine catabolic process"/>
    <property type="evidence" value="ECO:0000318"/>
    <property type="project" value="GO_Central"/>
</dbReference>
<dbReference type="GO" id="GO:0006629">
    <property type="term" value="P:lipid metabolic process"/>
    <property type="evidence" value="ECO:0007669"/>
    <property type="project" value="UniProtKB-KW"/>
</dbReference>
<dbReference type="GO" id="GO:0006572">
    <property type="term" value="P:tyrosine catabolic process"/>
    <property type="evidence" value="ECO:0000318"/>
    <property type="project" value="GO_Central"/>
</dbReference>
<dbReference type="FunFam" id="2.30.30.230:FF:000001">
    <property type="entry name" value="Fumarylacetoacetase"/>
    <property type="match status" value="1"/>
</dbReference>
<dbReference type="FunFam" id="3.90.850.10:FF:000004">
    <property type="entry name" value="Fumarylacetoacetase"/>
    <property type="match status" value="1"/>
</dbReference>
<dbReference type="Gene3D" id="2.30.30.230">
    <property type="entry name" value="Fumarylacetoacetase, N-terminal domain"/>
    <property type="match status" value="1"/>
</dbReference>
<dbReference type="Gene3D" id="3.90.850.10">
    <property type="entry name" value="Fumarylacetoacetase-like, C-terminal domain"/>
    <property type="match status" value="1"/>
</dbReference>
<dbReference type="InterPro" id="IPR005959">
    <property type="entry name" value="Fumarylacetoacetase"/>
</dbReference>
<dbReference type="InterPro" id="IPR011234">
    <property type="entry name" value="Fumarylacetoacetase-like_C"/>
</dbReference>
<dbReference type="InterPro" id="IPR036663">
    <property type="entry name" value="Fumarylacetoacetase_C_sf"/>
</dbReference>
<dbReference type="InterPro" id="IPR015377">
    <property type="entry name" value="Fumarylacetoacetase_N"/>
</dbReference>
<dbReference type="InterPro" id="IPR036462">
    <property type="entry name" value="Fumarylacetoacetase_N_sf"/>
</dbReference>
<dbReference type="NCBIfam" id="TIGR01266">
    <property type="entry name" value="fum_ac_acetase"/>
    <property type="match status" value="1"/>
</dbReference>
<dbReference type="PANTHER" id="PTHR43069">
    <property type="entry name" value="FUMARYLACETOACETASE"/>
    <property type="match status" value="1"/>
</dbReference>
<dbReference type="PANTHER" id="PTHR43069:SF2">
    <property type="entry name" value="FUMARYLACETOACETASE"/>
    <property type="match status" value="1"/>
</dbReference>
<dbReference type="Pfam" id="PF01557">
    <property type="entry name" value="FAA_hydrolase"/>
    <property type="match status" value="1"/>
</dbReference>
<dbReference type="Pfam" id="PF09298">
    <property type="entry name" value="FAA_hydrolase_N"/>
    <property type="match status" value="1"/>
</dbReference>
<dbReference type="SUPFAM" id="SSF56529">
    <property type="entry name" value="FAH"/>
    <property type="match status" value="1"/>
</dbReference>
<dbReference type="SUPFAM" id="SSF63433">
    <property type="entry name" value="Fumarylacetoacetate hydrolase, FAH, N-terminal domain"/>
    <property type="match status" value="1"/>
</dbReference>
<accession>P25093</accession>
<protein>
    <recommendedName>
        <fullName>Fumarylacetoacetase</fullName>
        <shortName>FAA</shortName>
        <ecNumber evidence="2">3.7.1.2</ecNumber>
    </recommendedName>
    <alternativeName>
        <fullName>Beta-diketonase</fullName>
    </alternativeName>
    <alternativeName>
        <fullName>Fumarylacetoacetate hydrolase</fullName>
    </alternativeName>
</protein>
<reference key="1">
    <citation type="journal article" date="1991" name="Gene">
        <title>Cloning and expression analysis of a cDNA encoding fumarylacetoacetate hydrolase: post-transcriptional modulation in rat liver and kidney.</title>
        <authorList>
            <person name="Labelle Y."/>
            <person name="Phaneuf D."/>
            <person name="Tanguay R.M."/>
        </authorList>
    </citation>
    <scope>NUCLEOTIDE SEQUENCE [MRNA]</scope>
    <scope>PARTIAL PROTEIN SEQUENCE</scope>
    <scope>TISSUE SPECIFICITY</scope>
    <source>
        <tissue>Liver</tissue>
    </source>
</reference>
<reference key="2">
    <citation type="journal article" date="2004" name="Genome Res.">
        <title>The status, quality, and expansion of the NIH full-length cDNA project: the Mammalian Gene Collection (MGC).</title>
        <authorList>
            <consortium name="The MGC Project Team"/>
        </authorList>
    </citation>
    <scope>NUCLEOTIDE SEQUENCE [LARGE SCALE MRNA]</scope>
    <source>
        <tissue>Kidney</tissue>
    </source>
</reference>
<reference key="3">
    <citation type="submission" date="2006-11" db="UniProtKB">
        <authorList>
            <person name="Lubec G."/>
            <person name="Afjehi-Sadat L."/>
        </authorList>
    </citation>
    <scope>PROTEIN SEQUENCE OF 32-47; 145-162 AND 382-402</scope>
    <scope>IDENTIFICATION BY MASS SPECTROMETRY</scope>
    <source>
        <strain>Sprague-Dawley</strain>
        <tissue>Spinal cord</tissue>
    </source>
</reference>
<reference key="4">
    <citation type="journal article" date="2012" name="Nat. Commun.">
        <title>Quantitative maps of protein phosphorylation sites across 14 different rat organs and tissues.</title>
        <authorList>
            <person name="Lundby A."/>
            <person name="Secher A."/>
            <person name="Lage K."/>
            <person name="Nordsborg N.B."/>
            <person name="Dmytriyev A."/>
            <person name="Lundby C."/>
            <person name="Olsen J.V."/>
        </authorList>
    </citation>
    <scope>PHOSPHORYLATION [LARGE SCALE ANALYSIS] AT SER-84; SER-92 AND SER-417</scope>
    <scope>IDENTIFICATION BY MASS SPECTROMETRY [LARGE SCALE ANALYSIS]</scope>
</reference>